<dbReference type="EC" id="2.7.4.6" evidence="1"/>
<dbReference type="EMBL" id="CP000909">
    <property type="protein sequence ID" value="ABY33936.1"/>
    <property type="molecule type" value="Genomic_DNA"/>
</dbReference>
<dbReference type="RefSeq" id="WP_012256592.1">
    <property type="nucleotide sequence ID" value="NC_010175.1"/>
</dbReference>
<dbReference type="RefSeq" id="YP_001634325.1">
    <property type="nucleotide sequence ID" value="NC_010175.1"/>
</dbReference>
<dbReference type="SMR" id="A9WFJ8"/>
<dbReference type="FunCoup" id="A9WFJ8">
    <property type="interactions" value="452"/>
</dbReference>
<dbReference type="STRING" id="324602.Caur_0697"/>
<dbReference type="EnsemblBacteria" id="ABY33936">
    <property type="protein sequence ID" value="ABY33936"/>
    <property type="gene ID" value="Caur_0697"/>
</dbReference>
<dbReference type="KEGG" id="cau:Caur_0697"/>
<dbReference type="PATRIC" id="fig|324602.8.peg.792"/>
<dbReference type="eggNOG" id="COG0105">
    <property type="taxonomic scope" value="Bacteria"/>
</dbReference>
<dbReference type="HOGENOM" id="CLU_060216_6_3_0"/>
<dbReference type="InParanoid" id="A9WFJ8"/>
<dbReference type="Proteomes" id="UP000002008">
    <property type="component" value="Chromosome"/>
</dbReference>
<dbReference type="GO" id="GO:0005737">
    <property type="term" value="C:cytoplasm"/>
    <property type="evidence" value="ECO:0007669"/>
    <property type="project" value="UniProtKB-SubCell"/>
</dbReference>
<dbReference type="GO" id="GO:0005524">
    <property type="term" value="F:ATP binding"/>
    <property type="evidence" value="ECO:0007669"/>
    <property type="project" value="UniProtKB-UniRule"/>
</dbReference>
<dbReference type="GO" id="GO:0046872">
    <property type="term" value="F:metal ion binding"/>
    <property type="evidence" value="ECO:0007669"/>
    <property type="project" value="UniProtKB-KW"/>
</dbReference>
<dbReference type="GO" id="GO:0004550">
    <property type="term" value="F:nucleoside diphosphate kinase activity"/>
    <property type="evidence" value="ECO:0007669"/>
    <property type="project" value="UniProtKB-UniRule"/>
</dbReference>
<dbReference type="GO" id="GO:0006241">
    <property type="term" value="P:CTP biosynthetic process"/>
    <property type="evidence" value="ECO:0007669"/>
    <property type="project" value="UniProtKB-UniRule"/>
</dbReference>
<dbReference type="GO" id="GO:0006183">
    <property type="term" value="P:GTP biosynthetic process"/>
    <property type="evidence" value="ECO:0007669"/>
    <property type="project" value="UniProtKB-UniRule"/>
</dbReference>
<dbReference type="GO" id="GO:0006163">
    <property type="term" value="P:purine nucleotide metabolic process"/>
    <property type="evidence" value="ECO:0000318"/>
    <property type="project" value="GO_Central"/>
</dbReference>
<dbReference type="GO" id="GO:0006220">
    <property type="term" value="P:pyrimidine nucleotide metabolic process"/>
    <property type="evidence" value="ECO:0000318"/>
    <property type="project" value="GO_Central"/>
</dbReference>
<dbReference type="GO" id="GO:0006228">
    <property type="term" value="P:UTP biosynthetic process"/>
    <property type="evidence" value="ECO:0007669"/>
    <property type="project" value="UniProtKB-UniRule"/>
</dbReference>
<dbReference type="CDD" id="cd04413">
    <property type="entry name" value="NDPk_I"/>
    <property type="match status" value="1"/>
</dbReference>
<dbReference type="FunFam" id="3.30.70.141:FF:000003">
    <property type="entry name" value="Nucleoside diphosphate kinase"/>
    <property type="match status" value="1"/>
</dbReference>
<dbReference type="Gene3D" id="3.30.70.141">
    <property type="entry name" value="Nucleoside diphosphate kinase-like domain"/>
    <property type="match status" value="1"/>
</dbReference>
<dbReference type="HAMAP" id="MF_00451">
    <property type="entry name" value="NDP_kinase"/>
    <property type="match status" value="1"/>
</dbReference>
<dbReference type="InterPro" id="IPR034907">
    <property type="entry name" value="NDK-like_dom"/>
</dbReference>
<dbReference type="InterPro" id="IPR036850">
    <property type="entry name" value="NDK-like_dom_sf"/>
</dbReference>
<dbReference type="InterPro" id="IPR001564">
    <property type="entry name" value="Nucleoside_diP_kinase"/>
</dbReference>
<dbReference type="InterPro" id="IPR023005">
    <property type="entry name" value="Nucleoside_diP_kinase_AS"/>
</dbReference>
<dbReference type="NCBIfam" id="NF001908">
    <property type="entry name" value="PRK00668.1"/>
    <property type="match status" value="1"/>
</dbReference>
<dbReference type="PANTHER" id="PTHR11349">
    <property type="entry name" value="NUCLEOSIDE DIPHOSPHATE KINASE"/>
    <property type="match status" value="1"/>
</dbReference>
<dbReference type="Pfam" id="PF00334">
    <property type="entry name" value="NDK"/>
    <property type="match status" value="1"/>
</dbReference>
<dbReference type="PRINTS" id="PR01243">
    <property type="entry name" value="NUCDPKINASE"/>
</dbReference>
<dbReference type="SMART" id="SM00562">
    <property type="entry name" value="NDK"/>
    <property type="match status" value="1"/>
</dbReference>
<dbReference type="SUPFAM" id="SSF54919">
    <property type="entry name" value="Nucleoside diphosphate kinase, NDK"/>
    <property type="match status" value="1"/>
</dbReference>
<dbReference type="PROSITE" id="PS00469">
    <property type="entry name" value="NDPK"/>
    <property type="match status" value="1"/>
</dbReference>
<dbReference type="PROSITE" id="PS51374">
    <property type="entry name" value="NDPK_LIKE"/>
    <property type="match status" value="1"/>
</dbReference>
<feature type="chain" id="PRO_1000080957" description="Nucleoside diphosphate kinase">
    <location>
        <begin position="1"/>
        <end position="151"/>
    </location>
</feature>
<feature type="active site" description="Pros-phosphohistidine intermediate" evidence="1">
    <location>
        <position position="116"/>
    </location>
</feature>
<feature type="binding site" evidence="1">
    <location>
        <position position="9"/>
    </location>
    <ligand>
        <name>ATP</name>
        <dbReference type="ChEBI" id="CHEBI:30616"/>
    </ligand>
</feature>
<feature type="binding site" evidence="1">
    <location>
        <position position="57"/>
    </location>
    <ligand>
        <name>ATP</name>
        <dbReference type="ChEBI" id="CHEBI:30616"/>
    </ligand>
</feature>
<feature type="binding site" evidence="1">
    <location>
        <position position="86"/>
    </location>
    <ligand>
        <name>ATP</name>
        <dbReference type="ChEBI" id="CHEBI:30616"/>
    </ligand>
</feature>
<feature type="binding site" evidence="1">
    <location>
        <position position="92"/>
    </location>
    <ligand>
        <name>ATP</name>
        <dbReference type="ChEBI" id="CHEBI:30616"/>
    </ligand>
</feature>
<feature type="binding site" evidence="1">
    <location>
        <position position="103"/>
    </location>
    <ligand>
        <name>ATP</name>
        <dbReference type="ChEBI" id="CHEBI:30616"/>
    </ligand>
</feature>
<feature type="binding site" evidence="1">
    <location>
        <position position="113"/>
    </location>
    <ligand>
        <name>ATP</name>
        <dbReference type="ChEBI" id="CHEBI:30616"/>
    </ligand>
</feature>
<organism>
    <name type="scientific">Chloroflexus aurantiacus (strain ATCC 29366 / DSM 635 / J-10-fl)</name>
    <dbReference type="NCBI Taxonomy" id="324602"/>
    <lineage>
        <taxon>Bacteria</taxon>
        <taxon>Bacillati</taxon>
        <taxon>Chloroflexota</taxon>
        <taxon>Chloroflexia</taxon>
        <taxon>Chloroflexales</taxon>
        <taxon>Chloroflexineae</taxon>
        <taxon>Chloroflexaceae</taxon>
        <taxon>Chloroflexus</taxon>
    </lineage>
</organism>
<name>NDK_CHLAA</name>
<gene>
    <name evidence="1" type="primary">ndk</name>
    <name type="ordered locus">Caur_0697</name>
</gene>
<proteinExistence type="inferred from homology"/>
<evidence type="ECO:0000255" key="1">
    <source>
        <dbReference type="HAMAP-Rule" id="MF_00451"/>
    </source>
</evidence>
<reference key="1">
    <citation type="journal article" date="2011" name="BMC Genomics">
        <title>Complete genome sequence of the filamentous anoxygenic phototrophic bacterium Chloroflexus aurantiacus.</title>
        <authorList>
            <person name="Tang K.H."/>
            <person name="Barry K."/>
            <person name="Chertkov O."/>
            <person name="Dalin E."/>
            <person name="Han C.S."/>
            <person name="Hauser L.J."/>
            <person name="Honchak B.M."/>
            <person name="Karbach L.E."/>
            <person name="Land M.L."/>
            <person name="Lapidus A."/>
            <person name="Larimer F.W."/>
            <person name="Mikhailova N."/>
            <person name="Pitluck S."/>
            <person name="Pierson B.K."/>
            <person name="Blankenship R.E."/>
        </authorList>
    </citation>
    <scope>NUCLEOTIDE SEQUENCE [LARGE SCALE GENOMIC DNA]</scope>
    <source>
        <strain>ATCC 29366 / DSM 635 / J-10-fl</strain>
    </source>
</reference>
<protein>
    <recommendedName>
        <fullName evidence="1">Nucleoside diphosphate kinase</fullName>
        <shortName evidence="1">NDK</shortName>
        <shortName evidence="1">NDP kinase</shortName>
        <ecNumber evidence="1">2.7.4.6</ecNumber>
    </recommendedName>
    <alternativeName>
        <fullName evidence="1">Nucleoside-2-P kinase</fullName>
    </alternativeName>
</protein>
<keyword id="KW-0067">ATP-binding</keyword>
<keyword id="KW-0963">Cytoplasm</keyword>
<keyword id="KW-0418">Kinase</keyword>
<keyword id="KW-0460">Magnesium</keyword>
<keyword id="KW-0479">Metal-binding</keyword>
<keyword id="KW-0546">Nucleotide metabolism</keyword>
<keyword id="KW-0547">Nucleotide-binding</keyword>
<keyword id="KW-0597">Phosphoprotein</keyword>
<keyword id="KW-1185">Reference proteome</keyword>
<keyword id="KW-0808">Transferase</keyword>
<sequence>MERALLILKPDAVQRGLIGAIISRFEQRGLKFQGLKLMQVDEALARRHYAEHEGKSFFNGLVSYITSAPVVVAVVAGKPGTVELVRAMVGATNPAKAAPGTIRGDFGVDIGRNLIHASDSPESGERETAIFFQPHELIGEWNRALDNWIYE</sequence>
<accession>A9WFJ8</accession>
<comment type="function">
    <text evidence="1">Major role in the synthesis of nucleoside triphosphates other than ATP. The ATP gamma phosphate is transferred to the NDP beta phosphate via a ping-pong mechanism, using a phosphorylated active-site intermediate.</text>
</comment>
<comment type="catalytic activity">
    <reaction evidence="1">
        <text>a 2'-deoxyribonucleoside 5'-diphosphate + ATP = a 2'-deoxyribonucleoside 5'-triphosphate + ADP</text>
        <dbReference type="Rhea" id="RHEA:44640"/>
        <dbReference type="ChEBI" id="CHEBI:30616"/>
        <dbReference type="ChEBI" id="CHEBI:61560"/>
        <dbReference type="ChEBI" id="CHEBI:73316"/>
        <dbReference type="ChEBI" id="CHEBI:456216"/>
        <dbReference type="EC" id="2.7.4.6"/>
    </reaction>
</comment>
<comment type="catalytic activity">
    <reaction evidence="1">
        <text>a ribonucleoside 5'-diphosphate + ATP = a ribonucleoside 5'-triphosphate + ADP</text>
        <dbReference type="Rhea" id="RHEA:18113"/>
        <dbReference type="ChEBI" id="CHEBI:30616"/>
        <dbReference type="ChEBI" id="CHEBI:57930"/>
        <dbReference type="ChEBI" id="CHEBI:61557"/>
        <dbReference type="ChEBI" id="CHEBI:456216"/>
        <dbReference type="EC" id="2.7.4.6"/>
    </reaction>
</comment>
<comment type="cofactor">
    <cofactor evidence="1">
        <name>Mg(2+)</name>
        <dbReference type="ChEBI" id="CHEBI:18420"/>
    </cofactor>
</comment>
<comment type="subunit">
    <text evidence="1">Homotetramer.</text>
</comment>
<comment type="subcellular location">
    <subcellularLocation>
        <location evidence="1">Cytoplasm</location>
    </subcellularLocation>
</comment>
<comment type="similarity">
    <text evidence="1">Belongs to the NDK family.</text>
</comment>